<proteinExistence type="inferred from homology"/>
<dbReference type="EC" id="3.1.1.96" evidence="1"/>
<dbReference type="EMBL" id="CP000507">
    <property type="protein sequence ID" value="ABM01605.1"/>
    <property type="molecule type" value="Genomic_DNA"/>
</dbReference>
<dbReference type="RefSeq" id="WP_011761509.1">
    <property type="nucleotide sequence ID" value="NC_008700.1"/>
</dbReference>
<dbReference type="SMR" id="A1SB48"/>
<dbReference type="STRING" id="326297.Sama_3402"/>
<dbReference type="KEGG" id="saz:Sama_3402"/>
<dbReference type="eggNOG" id="COG1490">
    <property type="taxonomic scope" value="Bacteria"/>
</dbReference>
<dbReference type="HOGENOM" id="CLU_076901_1_0_6"/>
<dbReference type="OrthoDB" id="9801395at2"/>
<dbReference type="Proteomes" id="UP000009175">
    <property type="component" value="Chromosome"/>
</dbReference>
<dbReference type="GO" id="GO:0005737">
    <property type="term" value="C:cytoplasm"/>
    <property type="evidence" value="ECO:0007669"/>
    <property type="project" value="UniProtKB-SubCell"/>
</dbReference>
<dbReference type="GO" id="GO:0051500">
    <property type="term" value="F:D-tyrosyl-tRNA(Tyr) deacylase activity"/>
    <property type="evidence" value="ECO:0007669"/>
    <property type="project" value="TreeGrafter"/>
</dbReference>
<dbReference type="GO" id="GO:0106026">
    <property type="term" value="F:Gly-tRNA(Ala) deacylase activity"/>
    <property type="evidence" value="ECO:0007669"/>
    <property type="project" value="UniProtKB-UniRule"/>
</dbReference>
<dbReference type="GO" id="GO:0043908">
    <property type="term" value="F:Ser(Gly)-tRNA(Ala) hydrolase activity"/>
    <property type="evidence" value="ECO:0007669"/>
    <property type="project" value="UniProtKB-UniRule"/>
</dbReference>
<dbReference type="GO" id="GO:0000049">
    <property type="term" value="F:tRNA binding"/>
    <property type="evidence" value="ECO:0007669"/>
    <property type="project" value="UniProtKB-UniRule"/>
</dbReference>
<dbReference type="GO" id="GO:0019478">
    <property type="term" value="P:D-amino acid catabolic process"/>
    <property type="evidence" value="ECO:0007669"/>
    <property type="project" value="UniProtKB-UniRule"/>
</dbReference>
<dbReference type="CDD" id="cd00563">
    <property type="entry name" value="Dtyr_deacylase"/>
    <property type="match status" value="1"/>
</dbReference>
<dbReference type="FunFam" id="3.50.80.10:FF:000001">
    <property type="entry name" value="D-aminoacyl-tRNA deacylase"/>
    <property type="match status" value="1"/>
</dbReference>
<dbReference type="Gene3D" id="3.50.80.10">
    <property type="entry name" value="D-tyrosyl-tRNA(Tyr) deacylase"/>
    <property type="match status" value="1"/>
</dbReference>
<dbReference type="HAMAP" id="MF_00518">
    <property type="entry name" value="Deacylase_Dtd"/>
    <property type="match status" value="1"/>
</dbReference>
<dbReference type="InterPro" id="IPR003732">
    <property type="entry name" value="Daa-tRNA_deacyls_DTD"/>
</dbReference>
<dbReference type="InterPro" id="IPR023509">
    <property type="entry name" value="DTD-like_sf"/>
</dbReference>
<dbReference type="NCBIfam" id="TIGR00256">
    <property type="entry name" value="D-aminoacyl-tRNA deacylase"/>
    <property type="match status" value="1"/>
</dbReference>
<dbReference type="PANTHER" id="PTHR10472:SF5">
    <property type="entry name" value="D-AMINOACYL-TRNA DEACYLASE 1"/>
    <property type="match status" value="1"/>
</dbReference>
<dbReference type="PANTHER" id="PTHR10472">
    <property type="entry name" value="D-TYROSYL-TRNA TYR DEACYLASE"/>
    <property type="match status" value="1"/>
</dbReference>
<dbReference type="Pfam" id="PF02580">
    <property type="entry name" value="Tyr_Deacylase"/>
    <property type="match status" value="1"/>
</dbReference>
<dbReference type="SUPFAM" id="SSF69500">
    <property type="entry name" value="DTD-like"/>
    <property type="match status" value="1"/>
</dbReference>
<evidence type="ECO:0000255" key="1">
    <source>
        <dbReference type="HAMAP-Rule" id="MF_00518"/>
    </source>
</evidence>
<sequence length="145" mass="15739">MIALIQRVSRASVTVDGEITGAIDQGLLVLLGVEQHDDRTKLEKLAHKVMNYRVFSDENGKMNLNVSQVGGSLLVVSQFTLAADTGRGLRPSFSGAGTPEQAERLYDEFVAHCRAQGVPTQTGRFAADMKVELLNDGPVTFHLQV</sequence>
<feature type="chain" id="PRO_1000050879" description="D-aminoacyl-tRNA deacylase">
    <location>
        <begin position="1"/>
        <end position="145"/>
    </location>
</feature>
<feature type="short sequence motif" description="Gly-cisPro motif, important for rejection of L-amino acids" evidence="1">
    <location>
        <begin position="137"/>
        <end position="138"/>
    </location>
</feature>
<gene>
    <name evidence="1" type="primary">dtd</name>
    <name type="ordered locus">Sama_3402</name>
</gene>
<accession>A1SB48</accession>
<protein>
    <recommendedName>
        <fullName evidence="1">D-aminoacyl-tRNA deacylase</fullName>
        <shortName evidence="1">DTD</shortName>
        <ecNumber evidence="1">3.1.1.96</ecNumber>
    </recommendedName>
    <alternativeName>
        <fullName evidence="1">Gly-tRNA(Ala) deacylase</fullName>
    </alternativeName>
</protein>
<reference key="1">
    <citation type="submission" date="2006-12" db="EMBL/GenBank/DDBJ databases">
        <title>Complete sequence of Shewanella amazonensis SB2B.</title>
        <authorList>
            <consortium name="US DOE Joint Genome Institute"/>
            <person name="Copeland A."/>
            <person name="Lucas S."/>
            <person name="Lapidus A."/>
            <person name="Barry K."/>
            <person name="Detter J.C."/>
            <person name="Glavina del Rio T."/>
            <person name="Hammon N."/>
            <person name="Israni S."/>
            <person name="Dalin E."/>
            <person name="Tice H."/>
            <person name="Pitluck S."/>
            <person name="Munk A.C."/>
            <person name="Brettin T."/>
            <person name="Bruce D."/>
            <person name="Han C."/>
            <person name="Tapia R."/>
            <person name="Gilna P."/>
            <person name="Schmutz J."/>
            <person name="Larimer F."/>
            <person name="Land M."/>
            <person name="Hauser L."/>
            <person name="Kyrpides N."/>
            <person name="Mikhailova N."/>
            <person name="Fredrickson J."/>
            <person name="Richardson P."/>
        </authorList>
    </citation>
    <scope>NUCLEOTIDE SEQUENCE [LARGE SCALE GENOMIC DNA]</scope>
    <source>
        <strain>ATCC BAA-1098 / SB2B</strain>
    </source>
</reference>
<organism>
    <name type="scientific">Shewanella amazonensis (strain ATCC BAA-1098 / SB2B)</name>
    <dbReference type="NCBI Taxonomy" id="326297"/>
    <lineage>
        <taxon>Bacteria</taxon>
        <taxon>Pseudomonadati</taxon>
        <taxon>Pseudomonadota</taxon>
        <taxon>Gammaproteobacteria</taxon>
        <taxon>Alteromonadales</taxon>
        <taxon>Shewanellaceae</taxon>
        <taxon>Shewanella</taxon>
    </lineage>
</organism>
<name>DTD_SHEAM</name>
<keyword id="KW-0963">Cytoplasm</keyword>
<keyword id="KW-0378">Hydrolase</keyword>
<keyword id="KW-1185">Reference proteome</keyword>
<keyword id="KW-0694">RNA-binding</keyword>
<keyword id="KW-0820">tRNA-binding</keyword>
<comment type="function">
    <text evidence="1">An aminoacyl-tRNA editing enzyme that deacylates mischarged D-aminoacyl-tRNAs. Also deacylates mischarged glycyl-tRNA(Ala), protecting cells against glycine mischarging by AlaRS. Acts via tRNA-based rather than protein-based catalysis; rejects L-amino acids rather than detecting D-amino acids in the active site. By recycling D-aminoacyl-tRNA to D-amino acids and free tRNA molecules, this enzyme counteracts the toxicity associated with the formation of D-aminoacyl-tRNA entities in vivo and helps enforce protein L-homochirality.</text>
</comment>
<comment type="catalytic activity">
    <reaction evidence="1">
        <text>glycyl-tRNA(Ala) + H2O = tRNA(Ala) + glycine + H(+)</text>
        <dbReference type="Rhea" id="RHEA:53744"/>
        <dbReference type="Rhea" id="RHEA-COMP:9657"/>
        <dbReference type="Rhea" id="RHEA-COMP:13640"/>
        <dbReference type="ChEBI" id="CHEBI:15377"/>
        <dbReference type="ChEBI" id="CHEBI:15378"/>
        <dbReference type="ChEBI" id="CHEBI:57305"/>
        <dbReference type="ChEBI" id="CHEBI:78442"/>
        <dbReference type="ChEBI" id="CHEBI:78522"/>
        <dbReference type="EC" id="3.1.1.96"/>
    </reaction>
</comment>
<comment type="catalytic activity">
    <reaction evidence="1">
        <text>a D-aminoacyl-tRNA + H2O = a tRNA + a D-alpha-amino acid + H(+)</text>
        <dbReference type="Rhea" id="RHEA:13953"/>
        <dbReference type="Rhea" id="RHEA-COMP:10123"/>
        <dbReference type="Rhea" id="RHEA-COMP:10124"/>
        <dbReference type="ChEBI" id="CHEBI:15377"/>
        <dbReference type="ChEBI" id="CHEBI:15378"/>
        <dbReference type="ChEBI" id="CHEBI:59871"/>
        <dbReference type="ChEBI" id="CHEBI:78442"/>
        <dbReference type="ChEBI" id="CHEBI:79333"/>
        <dbReference type="EC" id="3.1.1.96"/>
    </reaction>
</comment>
<comment type="subunit">
    <text evidence="1">Homodimer.</text>
</comment>
<comment type="subcellular location">
    <subcellularLocation>
        <location evidence="1">Cytoplasm</location>
    </subcellularLocation>
</comment>
<comment type="domain">
    <text evidence="1">A Gly-cisPro motif from one monomer fits into the active site of the other monomer to allow specific chiral rejection of L-amino acids.</text>
</comment>
<comment type="similarity">
    <text evidence="1">Belongs to the DTD family.</text>
</comment>